<feature type="chain" id="PRO_0000351752" description="Ribosome maturation factor RimM">
    <location>
        <begin position="1"/>
        <end position="207"/>
    </location>
</feature>
<feature type="domain" description="PRC barrel" evidence="1">
    <location>
        <begin position="130"/>
        <end position="207"/>
    </location>
</feature>
<proteinExistence type="inferred from homology"/>
<sequence length="207" mass="22581">MNRPQGEPAKALRLPAALLYAEPLPEDLVEVGYVGAAYGIRGWIKVQPHADDASALLHARRWWLLSPPQAGLVAADAARSQPVCVKIAQSREHSGTVVAQAAGVADRNLAEALRGRRVWIRRADFPAPDEDEFYWVDLIGCNVSNEQGELLGEVSGLIDNGAHQILQVAFVQPDGKAGERLIPFVDAFLREVDTAGKRIVVDWGLDY</sequence>
<gene>
    <name evidence="1" type="primary">rimM</name>
    <name type="ordered locus">RALTA_A0806</name>
</gene>
<dbReference type="EMBL" id="CU633749">
    <property type="protein sequence ID" value="CAQ68778.1"/>
    <property type="molecule type" value="Genomic_DNA"/>
</dbReference>
<dbReference type="RefSeq" id="WP_012352115.1">
    <property type="nucleotide sequence ID" value="NC_010528.1"/>
</dbReference>
<dbReference type="SMR" id="B3R397"/>
<dbReference type="GeneID" id="29763023"/>
<dbReference type="KEGG" id="cti:RALTA_A0806"/>
<dbReference type="eggNOG" id="COG0806">
    <property type="taxonomic scope" value="Bacteria"/>
</dbReference>
<dbReference type="HOGENOM" id="CLU_077636_1_0_4"/>
<dbReference type="BioCyc" id="CTAI977880:RALTA_RS03890-MONOMER"/>
<dbReference type="Proteomes" id="UP000001692">
    <property type="component" value="Chromosome 1"/>
</dbReference>
<dbReference type="GO" id="GO:0005737">
    <property type="term" value="C:cytoplasm"/>
    <property type="evidence" value="ECO:0007669"/>
    <property type="project" value="UniProtKB-SubCell"/>
</dbReference>
<dbReference type="GO" id="GO:0005840">
    <property type="term" value="C:ribosome"/>
    <property type="evidence" value="ECO:0007669"/>
    <property type="project" value="InterPro"/>
</dbReference>
<dbReference type="GO" id="GO:0043022">
    <property type="term" value="F:ribosome binding"/>
    <property type="evidence" value="ECO:0007669"/>
    <property type="project" value="InterPro"/>
</dbReference>
<dbReference type="GO" id="GO:0042274">
    <property type="term" value="P:ribosomal small subunit biogenesis"/>
    <property type="evidence" value="ECO:0007669"/>
    <property type="project" value="UniProtKB-UniRule"/>
</dbReference>
<dbReference type="GO" id="GO:0006364">
    <property type="term" value="P:rRNA processing"/>
    <property type="evidence" value="ECO:0007669"/>
    <property type="project" value="UniProtKB-UniRule"/>
</dbReference>
<dbReference type="Gene3D" id="2.30.30.240">
    <property type="entry name" value="PRC-barrel domain"/>
    <property type="match status" value="1"/>
</dbReference>
<dbReference type="Gene3D" id="2.40.30.60">
    <property type="entry name" value="RimM"/>
    <property type="match status" value="1"/>
</dbReference>
<dbReference type="HAMAP" id="MF_00014">
    <property type="entry name" value="Ribosome_mat_RimM"/>
    <property type="match status" value="1"/>
</dbReference>
<dbReference type="InterPro" id="IPR011033">
    <property type="entry name" value="PRC_barrel-like_sf"/>
</dbReference>
<dbReference type="InterPro" id="IPR056792">
    <property type="entry name" value="PRC_RimM"/>
</dbReference>
<dbReference type="InterPro" id="IPR011961">
    <property type="entry name" value="RimM"/>
</dbReference>
<dbReference type="InterPro" id="IPR002676">
    <property type="entry name" value="RimM_N"/>
</dbReference>
<dbReference type="InterPro" id="IPR036976">
    <property type="entry name" value="RimM_N_sf"/>
</dbReference>
<dbReference type="InterPro" id="IPR009000">
    <property type="entry name" value="Transl_B-barrel_sf"/>
</dbReference>
<dbReference type="NCBIfam" id="TIGR02273">
    <property type="entry name" value="16S_RimM"/>
    <property type="match status" value="1"/>
</dbReference>
<dbReference type="PANTHER" id="PTHR33692">
    <property type="entry name" value="RIBOSOME MATURATION FACTOR RIMM"/>
    <property type="match status" value="1"/>
</dbReference>
<dbReference type="PANTHER" id="PTHR33692:SF1">
    <property type="entry name" value="RIBOSOME MATURATION FACTOR RIMM"/>
    <property type="match status" value="1"/>
</dbReference>
<dbReference type="Pfam" id="PF24986">
    <property type="entry name" value="PRC_RimM"/>
    <property type="match status" value="1"/>
</dbReference>
<dbReference type="Pfam" id="PF01782">
    <property type="entry name" value="RimM"/>
    <property type="match status" value="1"/>
</dbReference>
<dbReference type="SUPFAM" id="SSF50346">
    <property type="entry name" value="PRC-barrel domain"/>
    <property type="match status" value="1"/>
</dbReference>
<dbReference type="SUPFAM" id="SSF50447">
    <property type="entry name" value="Translation proteins"/>
    <property type="match status" value="1"/>
</dbReference>
<organism>
    <name type="scientific">Cupriavidus taiwanensis (strain DSM 17343 / BCRC 17206 / CCUG 44338 / CIP 107171 / LMG 19424 / R1)</name>
    <name type="common">Ralstonia taiwanensis (strain LMG 19424)</name>
    <dbReference type="NCBI Taxonomy" id="977880"/>
    <lineage>
        <taxon>Bacteria</taxon>
        <taxon>Pseudomonadati</taxon>
        <taxon>Pseudomonadota</taxon>
        <taxon>Betaproteobacteria</taxon>
        <taxon>Burkholderiales</taxon>
        <taxon>Burkholderiaceae</taxon>
        <taxon>Cupriavidus</taxon>
    </lineage>
</organism>
<reference key="1">
    <citation type="journal article" date="2008" name="Genome Res.">
        <title>Genome sequence of the beta-rhizobium Cupriavidus taiwanensis and comparative genomics of rhizobia.</title>
        <authorList>
            <person name="Amadou C."/>
            <person name="Pascal G."/>
            <person name="Mangenot S."/>
            <person name="Glew M."/>
            <person name="Bontemps C."/>
            <person name="Capela D."/>
            <person name="Carrere S."/>
            <person name="Cruveiller S."/>
            <person name="Dossat C."/>
            <person name="Lajus A."/>
            <person name="Marchetti M."/>
            <person name="Poinsot V."/>
            <person name="Rouy Z."/>
            <person name="Servin B."/>
            <person name="Saad M."/>
            <person name="Schenowitz C."/>
            <person name="Barbe V."/>
            <person name="Batut J."/>
            <person name="Medigue C."/>
            <person name="Masson-Boivin C."/>
        </authorList>
    </citation>
    <scope>NUCLEOTIDE SEQUENCE [LARGE SCALE GENOMIC DNA]</scope>
    <source>
        <strain>DSM 17343 / BCRC 17206 / CCUG 44338 / CIP 107171 / LMG 19424 / R1</strain>
    </source>
</reference>
<accession>B3R397</accession>
<protein>
    <recommendedName>
        <fullName evidence="1">Ribosome maturation factor RimM</fullName>
    </recommendedName>
</protein>
<comment type="function">
    <text evidence="1">An accessory protein needed during the final step in the assembly of 30S ribosomal subunit, possibly for assembly of the head region. Essential for efficient processing of 16S rRNA. May be needed both before and after RbfA during the maturation of 16S rRNA. It has affinity for free ribosomal 30S subunits but not for 70S ribosomes.</text>
</comment>
<comment type="subunit">
    <text evidence="1">Binds ribosomal protein uS19.</text>
</comment>
<comment type="subcellular location">
    <subcellularLocation>
        <location evidence="1">Cytoplasm</location>
    </subcellularLocation>
</comment>
<comment type="domain">
    <text evidence="1">The PRC barrel domain binds ribosomal protein uS19.</text>
</comment>
<comment type="similarity">
    <text evidence="1">Belongs to the RimM family.</text>
</comment>
<keyword id="KW-0143">Chaperone</keyword>
<keyword id="KW-0963">Cytoplasm</keyword>
<keyword id="KW-0690">Ribosome biogenesis</keyword>
<keyword id="KW-0698">rRNA processing</keyword>
<evidence type="ECO:0000255" key="1">
    <source>
        <dbReference type="HAMAP-Rule" id="MF_00014"/>
    </source>
</evidence>
<name>RIMM_CUPTR</name>